<name>RR11_ACOCL</name>
<gene>
    <name evidence="1" type="primary">rps11</name>
</gene>
<geneLocation type="chloroplast"/>
<feature type="chain" id="PRO_0000230446" description="Small ribosomal subunit protein uS11c">
    <location>
        <begin position="1"/>
        <end position="138"/>
    </location>
</feature>
<protein>
    <recommendedName>
        <fullName evidence="1">Small ribosomal subunit protein uS11c</fullName>
    </recommendedName>
    <alternativeName>
        <fullName evidence="2">30S ribosomal protein S11, chloroplastic</fullName>
    </alternativeName>
</protein>
<dbReference type="EMBL" id="AJ879453">
    <property type="protein sequence ID" value="CAI53827.1"/>
    <property type="molecule type" value="Genomic_DNA"/>
</dbReference>
<dbReference type="RefSeq" id="YP_319796.1">
    <property type="nucleotide sequence ID" value="NC_007407.1"/>
</dbReference>
<dbReference type="SMR" id="Q3V501"/>
<dbReference type="GeneID" id="3677453"/>
<dbReference type="GO" id="GO:0009507">
    <property type="term" value="C:chloroplast"/>
    <property type="evidence" value="ECO:0007669"/>
    <property type="project" value="UniProtKB-SubCell"/>
</dbReference>
<dbReference type="GO" id="GO:1990904">
    <property type="term" value="C:ribonucleoprotein complex"/>
    <property type="evidence" value="ECO:0007669"/>
    <property type="project" value="UniProtKB-KW"/>
</dbReference>
<dbReference type="GO" id="GO:0005840">
    <property type="term" value="C:ribosome"/>
    <property type="evidence" value="ECO:0007669"/>
    <property type="project" value="UniProtKB-KW"/>
</dbReference>
<dbReference type="GO" id="GO:0019843">
    <property type="term" value="F:rRNA binding"/>
    <property type="evidence" value="ECO:0007669"/>
    <property type="project" value="UniProtKB-UniRule"/>
</dbReference>
<dbReference type="GO" id="GO:0003735">
    <property type="term" value="F:structural constituent of ribosome"/>
    <property type="evidence" value="ECO:0007669"/>
    <property type="project" value="InterPro"/>
</dbReference>
<dbReference type="GO" id="GO:0006412">
    <property type="term" value="P:translation"/>
    <property type="evidence" value="ECO:0007669"/>
    <property type="project" value="UniProtKB-UniRule"/>
</dbReference>
<dbReference type="FunFam" id="3.30.420.80:FF:000003">
    <property type="entry name" value="30S ribosomal protein S11, chloroplastic"/>
    <property type="match status" value="1"/>
</dbReference>
<dbReference type="Gene3D" id="3.30.420.80">
    <property type="entry name" value="Ribosomal protein S11"/>
    <property type="match status" value="1"/>
</dbReference>
<dbReference type="HAMAP" id="MF_01310">
    <property type="entry name" value="Ribosomal_uS11"/>
    <property type="match status" value="1"/>
</dbReference>
<dbReference type="InterPro" id="IPR001971">
    <property type="entry name" value="Ribosomal_uS11"/>
</dbReference>
<dbReference type="InterPro" id="IPR019981">
    <property type="entry name" value="Ribosomal_uS11_bac-type"/>
</dbReference>
<dbReference type="InterPro" id="IPR018102">
    <property type="entry name" value="Ribosomal_uS11_CS"/>
</dbReference>
<dbReference type="InterPro" id="IPR036967">
    <property type="entry name" value="Ribosomal_uS11_sf"/>
</dbReference>
<dbReference type="NCBIfam" id="NF003698">
    <property type="entry name" value="PRK05309.1"/>
    <property type="match status" value="1"/>
</dbReference>
<dbReference type="NCBIfam" id="TIGR03632">
    <property type="entry name" value="uS11_bact"/>
    <property type="match status" value="1"/>
</dbReference>
<dbReference type="PANTHER" id="PTHR11759">
    <property type="entry name" value="40S RIBOSOMAL PROTEIN S14/30S RIBOSOMAL PROTEIN S11"/>
    <property type="match status" value="1"/>
</dbReference>
<dbReference type="Pfam" id="PF00411">
    <property type="entry name" value="Ribosomal_S11"/>
    <property type="match status" value="1"/>
</dbReference>
<dbReference type="PIRSF" id="PIRSF002131">
    <property type="entry name" value="Ribosomal_S11"/>
    <property type="match status" value="1"/>
</dbReference>
<dbReference type="SUPFAM" id="SSF53137">
    <property type="entry name" value="Translational machinery components"/>
    <property type="match status" value="1"/>
</dbReference>
<dbReference type="PROSITE" id="PS00054">
    <property type="entry name" value="RIBOSOMAL_S11"/>
    <property type="match status" value="1"/>
</dbReference>
<evidence type="ECO:0000255" key="1">
    <source>
        <dbReference type="HAMAP-Rule" id="MF_01310"/>
    </source>
</evidence>
<evidence type="ECO:0000305" key="2"/>
<comment type="subunit">
    <text evidence="1">Part of the 30S ribosomal subunit.</text>
</comment>
<comment type="subcellular location">
    <subcellularLocation>
        <location>Plastid</location>
        <location>Chloroplast</location>
    </subcellularLocation>
</comment>
<comment type="similarity">
    <text evidence="1">Belongs to the universal ribosomal protein uS11 family.</text>
</comment>
<reference key="1">
    <citation type="journal article" date="2005" name="Mol. Biol. Evol.">
        <title>Analysis of Acorus calamus chloroplast genome and its phylogenetic implications.</title>
        <authorList>
            <person name="Goremykin V.V."/>
            <person name="Holland B."/>
            <person name="Hirsch-Ernst K.I."/>
            <person name="Hellwig F.H."/>
        </authorList>
    </citation>
    <scope>NUCLEOTIDE SEQUENCE [LARGE SCALE GENOMIC DNA]</scope>
</reference>
<organism>
    <name type="scientific">Acorus calamus</name>
    <name type="common">Sweet flag</name>
    <dbReference type="NCBI Taxonomy" id="4465"/>
    <lineage>
        <taxon>Eukaryota</taxon>
        <taxon>Viridiplantae</taxon>
        <taxon>Streptophyta</taxon>
        <taxon>Embryophyta</taxon>
        <taxon>Tracheophyta</taxon>
        <taxon>Spermatophyta</taxon>
        <taxon>Magnoliopsida</taxon>
        <taxon>Liliopsida</taxon>
        <taxon>Acoraceae</taxon>
        <taxon>Acorus</taxon>
    </lineage>
</organism>
<keyword id="KW-0150">Chloroplast</keyword>
<keyword id="KW-0934">Plastid</keyword>
<keyword id="KW-0687">Ribonucleoprotein</keyword>
<keyword id="KW-0689">Ribosomal protein</keyword>
<keyword id="KW-0694">RNA-binding</keyword>
<keyword id="KW-0699">rRNA-binding</keyword>
<proteinExistence type="inferred from homology"/>
<sequence length="138" mass="15027">MTKTIPRIGSRRNGRIGLRKTGRRIPKGIIHVQASFNNTIVTVTDVRGRVVSWSSAGTCGFKGTRRGTPFAAQTAAGNAIRTVVDQGMQRAEVMIKGPGLGRDAALRAIRRSGILLNFVRDVTPMPHNGCRPPKKRRV</sequence>
<accession>Q3V501</accession>